<comment type="function">
    <text evidence="1">This is one of the proteins that bind and probably mediate the attachment of the 5S RNA into the large ribosomal subunit, where it forms part of the central protuberance. In the 70S ribosome it contacts protein S13 of the 30S subunit (bridge B1b), connecting the 2 subunits; this bridge is implicated in subunit movement. Contacts the P site tRNA; the 5S rRNA and some of its associated proteins might help stabilize positioning of ribosome-bound tRNAs.</text>
</comment>
<comment type="subunit">
    <text evidence="1">Part of the 50S ribosomal subunit; part of the 5S rRNA/L5/L18/L25 subcomplex. Contacts the 5S rRNA and the P site tRNA. Forms a bridge to the 30S subunit in the 70S ribosome.</text>
</comment>
<comment type="similarity">
    <text evidence="1">Belongs to the universal ribosomal protein uL5 family.</text>
</comment>
<name>RL5_LACLS</name>
<gene>
    <name evidence="1" type="primary">rplE</name>
    <name type="ordered locus">LACR_2390</name>
</gene>
<reference key="1">
    <citation type="journal article" date="2006" name="Proc. Natl. Acad. Sci. U.S.A.">
        <title>Comparative genomics of the lactic acid bacteria.</title>
        <authorList>
            <person name="Makarova K.S."/>
            <person name="Slesarev A."/>
            <person name="Wolf Y.I."/>
            <person name="Sorokin A."/>
            <person name="Mirkin B."/>
            <person name="Koonin E.V."/>
            <person name="Pavlov A."/>
            <person name="Pavlova N."/>
            <person name="Karamychev V."/>
            <person name="Polouchine N."/>
            <person name="Shakhova V."/>
            <person name="Grigoriev I."/>
            <person name="Lou Y."/>
            <person name="Rohksar D."/>
            <person name="Lucas S."/>
            <person name="Huang K."/>
            <person name="Goodstein D.M."/>
            <person name="Hawkins T."/>
            <person name="Plengvidhya V."/>
            <person name="Welker D."/>
            <person name="Hughes J."/>
            <person name="Goh Y."/>
            <person name="Benson A."/>
            <person name="Baldwin K."/>
            <person name="Lee J.-H."/>
            <person name="Diaz-Muniz I."/>
            <person name="Dosti B."/>
            <person name="Smeianov V."/>
            <person name="Wechter W."/>
            <person name="Barabote R."/>
            <person name="Lorca G."/>
            <person name="Altermann E."/>
            <person name="Barrangou R."/>
            <person name="Ganesan B."/>
            <person name="Xie Y."/>
            <person name="Rawsthorne H."/>
            <person name="Tamir D."/>
            <person name="Parker C."/>
            <person name="Breidt F."/>
            <person name="Broadbent J.R."/>
            <person name="Hutkins R."/>
            <person name="O'Sullivan D."/>
            <person name="Steele J."/>
            <person name="Unlu G."/>
            <person name="Saier M.H. Jr."/>
            <person name="Klaenhammer T."/>
            <person name="Richardson P."/>
            <person name="Kozyavkin S."/>
            <person name="Weimer B.C."/>
            <person name="Mills D.A."/>
        </authorList>
    </citation>
    <scope>NUCLEOTIDE SEQUENCE [LARGE SCALE GENOMIC DNA]</scope>
    <source>
        <strain>SK11</strain>
    </source>
</reference>
<sequence length="180" mass="20006">MTNRLKEKYTNEVVPALTEQFNYTSIMAVPKVDKIVINMGVGDAVNNSKNLDKAVAELALISGQKPLITKAKKSVAAFRLREGMPIGAKVTLRGERMFEFLDKLVTVSLPRVRDFHGVSNKAFDGRGNYTLGVKEQLIFPEINYDDVDKVRGMDIVIVTTANTDEESRELLAKLGMPFAK</sequence>
<organism>
    <name type="scientific">Lactococcus lactis subsp. cremoris (strain SK11)</name>
    <dbReference type="NCBI Taxonomy" id="272622"/>
    <lineage>
        <taxon>Bacteria</taxon>
        <taxon>Bacillati</taxon>
        <taxon>Bacillota</taxon>
        <taxon>Bacilli</taxon>
        <taxon>Lactobacillales</taxon>
        <taxon>Streptococcaceae</taxon>
        <taxon>Lactococcus</taxon>
        <taxon>Lactococcus cremoris subsp. cremoris</taxon>
    </lineage>
</organism>
<dbReference type="EMBL" id="CP000425">
    <property type="protein sequence ID" value="ABJ73836.1"/>
    <property type="molecule type" value="Genomic_DNA"/>
</dbReference>
<dbReference type="RefSeq" id="WP_003129948.1">
    <property type="nucleotide sequence ID" value="NC_008527.1"/>
</dbReference>
<dbReference type="SMR" id="Q02W36"/>
<dbReference type="GeneID" id="89634434"/>
<dbReference type="KEGG" id="llc:LACR_2390"/>
<dbReference type="HOGENOM" id="CLU_061015_2_1_9"/>
<dbReference type="Proteomes" id="UP000000240">
    <property type="component" value="Chromosome"/>
</dbReference>
<dbReference type="GO" id="GO:1990904">
    <property type="term" value="C:ribonucleoprotein complex"/>
    <property type="evidence" value="ECO:0007669"/>
    <property type="project" value="UniProtKB-KW"/>
</dbReference>
<dbReference type="GO" id="GO:0005840">
    <property type="term" value="C:ribosome"/>
    <property type="evidence" value="ECO:0007669"/>
    <property type="project" value="UniProtKB-KW"/>
</dbReference>
<dbReference type="GO" id="GO:0019843">
    <property type="term" value="F:rRNA binding"/>
    <property type="evidence" value="ECO:0007669"/>
    <property type="project" value="UniProtKB-UniRule"/>
</dbReference>
<dbReference type="GO" id="GO:0003735">
    <property type="term" value="F:structural constituent of ribosome"/>
    <property type="evidence" value="ECO:0007669"/>
    <property type="project" value="InterPro"/>
</dbReference>
<dbReference type="GO" id="GO:0000049">
    <property type="term" value="F:tRNA binding"/>
    <property type="evidence" value="ECO:0007669"/>
    <property type="project" value="UniProtKB-UniRule"/>
</dbReference>
<dbReference type="GO" id="GO:0006412">
    <property type="term" value="P:translation"/>
    <property type="evidence" value="ECO:0007669"/>
    <property type="project" value="UniProtKB-UniRule"/>
</dbReference>
<dbReference type="FunFam" id="3.30.1440.10:FF:000001">
    <property type="entry name" value="50S ribosomal protein L5"/>
    <property type="match status" value="1"/>
</dbReference>
<dbReference type="Gene3D" id="3.30.1440.10">
    <property type="match status" value="1"/>
</dbReference>
<dbReference type="HAMAP" id="MF_01333_B">
    <property type="entry name" value="Ribosomal_uL5_B"/>
    <property type="match status" value="1"/>
</dbReference>
<dbReference type="InterPro" id="IPR002132">
    <property type="entry name" value="Ribosomal_uL5"/>
</dbReference>
<dbReference type="InterPro" id="IPR020930">
    <property type="entry name" value="Ribosomal_uL5_bac-type"/>
</dbReference>
<dbReference type="InterPro" id="IPR031309">
    <property type="entry name" value="Ribosomal_uL5_C"/>
</dbReference>
<dbReference type="InterPro" id="IPR020929">
    <property type="entry name" value="Ribosomal_uL5_CS"/>
</dbReference>
<dbReference type="InterPro" id="IPR022803">
    <property type="entry name" value="Ribosomal_uL5_dom_sf"/>
</dbReference>
<dbReference type="InterPro" id="IPR031310">
    <property type="entry name" value="Ribosomal_uL5_N"/>
</dbReference>
<dbReference type="NCBIfam" id="NF000585">
    <property type="entry name" value="PRK00010.1"/>
    <property type="match status" value="1"/>
</dbReference>
<dbReference type="PANTHER" id="PTHR11994">
    <property type="entry name" value="60S RIBOSOMAL PROTEIN L11-RELATED"/>
    <property type="match status" value="1"/>
</dbReference>
<dbReference type="Pfam" id="PF00281">
    <property type="entry name" value="Ribosomal_L5"/>
    <property type="match status" value="1"/>
</dbReference>
<dbReference type="Pfam" id="PF00673">
    <property type="entry name" value="Ribosomal_L5_C"/>
    <property type="match status" value="1"/>
</dbReference>
<dbReference type="PIRSF" id="PIRSF002161">
    <property type="entry name" value="Ribosomal_L5"/>
    <property type="match status" value="1"/>
</dbReference>
<dbReference type="SUPFAM" id="SSF55282">
    <property type="entry name" value="RL5-like"/>
    <property type="match status" value="1"/>
</dbReference>
<dbReference type="PROSITE" id="PS00358">
    <property type="entry name" value="RIBOSOMAL_L5"/>
    <property type="match status" value="1"/>
</dbReference>
<feature type="chain" id="PRO_1000052758" description="Large ribosomal subunit protein uL5">
    <location>
        <begin position="1"/>
        <end position="180"/>
    </location>
</feature>
<evidence type="ECO:0000255" key="1">
    <source>
        <dbReference type="HAMAP-Rule" id="MF_01333"/>
    </source>
</evidence>
<evidence type="ECO:0000305" key="2"/>
<accession>Q02W36</accession>
<keyword id="KW-0687">Ribonucleoprotein</keyword>
<keyword id="KW-0689">Ribosomal protein</keyword>
<keyword id="KW-0694">RNA-binding</keyword>
<keyword id="KW-0699">rRNA-binding</keyword>
<keyword id="KW-0820">tRNA-binding</keyword>
<proteinExistence type="inferred from homology"/>
<protein>
    <recommendedName>
        <fullName evidence="1">Large ribosomal subunit protein uL5</fullName>
    </recommendedName>
    <alternativeName>
        <fullName evidence="2">50S ribosomal protein L5</fullName>
    </alternativeName>
</protein>